<comment type="similarity">
    <text evidence="1">Belongs to the eukaryotic ribosomal protein eS21 family.</text>
</comment>
<protein>
    <recommendedName>
        <fullName evidence="1">Small ribosomal subunit protein eS21</fullName>
    </recommendedName>
    <alternativeName>
        <fullName>40S ribosomal protein S21</fullName>
    </alternativeName>
</protein>
<organism>
    <name type="scientific">Dictyostelium discoideum</name>
    <name type="common">Social amoeba</name>
    <dbReference type="NCBI Taxonomy" id="44689"/>
    <lineage>
        <taxon>Eukaryota</taxon>
        <taxon>Amoebozoa</taxon>
        <taxon>Evosea</taxon>
        <taxon>Eumycetozoa</taxon>
        <taxon>Dictyostelia</taxon>
        <taxon>Dictyosteliales</taxon>
        <taxon>Dictyosteliaceae</taxon>
        <taxon>Dictyostelium</taxon>
    </lineage>
</organism>
<keyword id="KW-1185">Reference proteome</keyword>
<keyword id="KW-0687">Ribonucleoprotein</keyword>
<keyword id="KW-0689">Ribosomal protein</keyword>
<proteinExistence type="inferred from homology"/>
<name>RS21_DICDI</name>
<evidence type="ECO:0000305" key="1"/>
<reference key="1">
    <citation type="journal article" date="2005" name="Nature">
        <title>The genome of the social amoeba Dictyostelium discoideum.</title>
        <authorList>
            <person name="Eichinger L."/>
            <person name="Pachebat J.A."/>
            <person name="Gloeckner G."/>
            <person name="Rajandream M.A."/>
            <person name="Sucgang R."/>
            <person name="Berriman M."/>
            <person name="Song J."/>
            <person name="Olsen R."/>
            <person name="Szafranski K."/>
            <person name="Xu Q."/>
            <person name="Tunggal B."/>
            <person name="Kummerfeld S."/>
            <person name="Madera M."/>
            <person name="Konfortov B.A."/>
            <person name="Rivero F."/>
            <person name="Bankier A.T."/>
            <person name="Lehmann R."/>
            <person name="Hamlin N."/>
            <person name="Davies R."/>
            <person name="Gaudet P."/>
            <person name="Fey P."/>
            <person name="Pilcher K."/>
            <person name="Chen G."/>
            <person name="Saunders D."/>
            <person name="Sodergren E.J."/>
            <person name="Davis P."/>
            <person name="Kerhornou A."/>
            <person name="Nie X."/>
            <person name="Hall N."/>
            <person name="Anjard C."/>
            <person name="Hemphill L."/>
            <person name="Bason N."/>
            <person name="Farbrother P."/>
            <person name="Desany B."/>
            <person name="Just E."/>
            <person name="Morio T."/>
            <person name="Rost R."/>
            <person name="Churcher C.M."/>
            <person name="Cooper J."/>
            <person name="Haydock S."/>
            <person name="van Driessche N."/>
            <person name="Cronin A."/>
            <person name="Goodhead I."/>
            <person name="Muzny D.M."/>
            <person name="Mourier T."/>
            <person name="Pain A."/>
            <person name="Lu M."/>
            <person name="Harper D."/>
            <person name="Lindsay R."/>
            <person name="Hauser H."/>
            <person name="James K.D."/>
            <person name="Quiles M."/>
            <person name="Madan Babu M."/>
            <person name="Saito T."/>
            <person name="Buchrieser C."/>
            <person name="Wardroper A."/>
            <person name="Felder M."/>
            <person name="Thangavelu M."/>
            <person name="Johnson D."/>
            <person name="Knights A."/>
            <person name="Loulseged H."/>
            <person name="Mungall K.L."/>
            <person name="Oliver K."/>
            <person name="Price C."/>
            <person name="Quail M.A."/>
            <person name="Urushihara H."/>
            <person name="Hernandez J."/>
            <person name="Rabbinowitsch E."/>
            <person name="Steffen D."/>
            <person name="Sanders M."/>
            <person name="Ma J."/>
            <person name="Kohara Y."/>
            <person name="Sharp S."/>
            <person name="Simmonds M.N."/>
            <person name="Spiegler S."/>
            <person name="Tivey A."/>
            <person name="Sugano S."/>
            <person name="White B."/>
            <person name="Walker D."/>
            <person name="Woodward J.R."/>
            <person name="Winckler T."/>
            <person name="Tanaka Y."/>
            <person name="Shaulsky G."/>
            <person name="Schleicher M."/>
            <person name="Weinstock G.M."/>
            <person name="Rosenthal A."/>
            <person name="Cox E.C."/>
            <person name="Chisholm R.L."/>
            <person name="Gibbs R.A."/>
            <person name="Loomis W.F."/>
            <person name="Platzer M."/>
            <person name="Kay R.R."/>
            <person name="Williams J.G."/>
            <person name="Dear P.H."/>
            <person name="Noegel A.A."/>
            <person name="Barrell B.G."/>
            <person name="Kuspa A."/>
        </authorList>
    </citation>
    <scope>NUCLEOTIDE SEQUENCE [LARGE SCALE GENOMIC DNA]</scope>
    <source>
        <strain>AX4</strain>
    </source>
</reference>
<gene>
    <name type="primary">rps21</name>
    <name type="ORF">DDB_G0293700</name>
</gene>
<sequence>MDSKNVELYTPRKCSATNRLITAKDHASVQINIGHVNAEGIYNGEQTIFAFCGFLRNNGQSDAALNRLAQQKGFLKSF</sequence>
<dbReference type="EMBL" id="AAFI02000218">
    <property type="protein sequence ID" value="EAL60662.1"/>
    <property type="molecule type" value="Genomic_DNA"/>
</dbReference>
<dbReference type="RefSeq" id="XP_628995.1">
    <property type="nucleotide sequence ID" value="XM_628993.2"/>
</dbReference>
<dbReference type="SMR" id="Q54BN4"/>
<dbReference type="FunCoup" id="Q54BN4">
    <property type="interactions" value="555"/>
</dbReference>
<dbReference type="STRING" id="44689.Q54BN4"/>
<dbReference type="PaxDb" id="44689-DDB0231061"/>
<dbReference type="EnsemblProtists" id="EAL60662">
    <property type="protein sequence ID" value="EAL60662"/>
    <property type="gene ID" value="DDB_G0293700"/>
</dbReference>
<dbReference type="GeneID" id="8629279"/>
<dbReference type="KEGG" id="ddi:DDB_G0293700"/>
<dbReference type="dictyBase" id="DDB_G0293700">
    <property type="gene designation" value="rps21"/>
</dbReference>
<dbReference type="VEuPathDB" id="AmoebaDB:DDB_G0293700"/>
<dbReference type="eggNOG" id="KOG3486">
    <property type="taxonomic scope" value="Eukaryota"/>
</dbReference>
<dbReference type="HOGENOM" id="CLU_167122_2_0_1"/>
<dbReference type="InParanoid" id="Q54BN4"/>
<dbReference type="OMA" id="GESDACM"/>
<dbReference type="PhylomeDB" id="Q54BN4"/>
<dbReference type="Reactome" id="R-DDI-156827">
    <property type="pathway name" value="L13a-mediated translational silencing of Ceruloplasmin expression"/>
</dbReference>
<dbReference type="Reactome" id="R-DDI-1799339">
    <property type="pathway name" value="SRP-dependent cotranslational protein targeting to membrane"/>
</dbReference>
<dbReference type="Reactome" id="R-DDI-72689">
    <property type="pathway name" value="Formation of a pool of free 40S subunits"/>
</dbReference>
<dbReference type="Reactome" id="R-DDI-72695">
    <property type="pathway name" value="Formation of the ternary complex, and subsequently, the 43S complex"/>
</dbReference>
<dbReference type="Reactome" id="R-DDI-72702">
    <property type="pathway name" value="Ribosomal scanning and start codon recognition"/>
</dbReference>
<dbReference type="Reactome" id="R-DDI-72706">
    <property type="pathway name" value="GTP hydrolysis and joining of the 60S ribosomal subunit"/>
</dbReference>
<dbReference type="Reactome" id="R-DDI-975956">
    <property type="pathway name" value="Nonsense Mediated Decay (NMD) independent of the Exon Junction Complex (EJC)"/>
</dbReference>
<dbReference type="Reactome" id="R-DDI-975957">
    <property type="pathway name" value="Nonsense Mediated Decay (NMD) enhanced by the Exon Junction Complex (EJC)"/>
</dbReference>
<dbReference type="PRO" id="PR:Q54BN4"/>
<dbReference type="Proteomes" id="UP000002195">
    <property type="component" value="Chromosome 6"/>
</dbReference>
<dbReference type="GO" id="GO:0022627">
    <property type="term" value="C:cytosolic small ribosomal subunit"/>
    <property type="evidence" value="ECO:0000318"/>
    <property type="project" value="GO_Central"/>
</dbReference>
<dbReference type="GO" id="GO:0003735">
    <property type="term" value="F:structural constituent of ribosome"/>
    <property type="evidence" value="ECO:0000318"/>
    <property type="project" value="GO_Central"/>
</dbReference>
<dbReference type="GO" id="GO:0000447">
    <property type="term" value="P:endonucleolytic cleavage in ITS1 to separate SSU-rRNA from 5.8S rRNA and LSU-rRNA from tricistronic rRNA transcript (SSU-rRNA, 5.8S rRNA, LSU-rRNA)"/>
    <property type="evidence" value="ECO:0000318"/>
    <property type="project" value="GO_Central"/>
</dbReference>
<dbReference type="GO" id="GO:0000461">
    <property type="term" value="P:endonucleolytic cleavage to generate mature 3'-end of SSU-rRNA from (SSU-rRNA, 5.8S rRNA, LSU-rRNA)"/>
    <property type="evidence" value="ECO:0000318"/>
    <property type="project" value="GO_Central"/>
</dbReference>
<dbReference type="GO" id="GO:0006412">
    <property type="term" value="P:translation"/>
    <property type="evidence" value="ECO:0007669"/>
    <property type="project" value="InterPro"/>
</dbReference>
<dbReference type="FunFam" id="3.30.1230.20:FF:000001">
    <property type="entry name" value="40S ribosomal protein S21"/>
    <property type="match status" value="1"/>
</dbReference>
<dbReference type="Gene3D" id="3.30.1230.20">
    <property type="match status" value="1"/>
</dbReference>
<dbReference type="InterPro" id="IPR001931">
    <property type="entry name" value="Ribosomal_eS21"/>
</dbReference>
<dbReference type="InterPro" id="IPR038579">
    <property type="entry name" value="Ribosomal_eS21_sf"/>
</dbReference>
<dbReference type="PANTHER" id="PTHR10442">
    <property type="entry name" value="40S RIBOSOMAL PROTEIN S21"/>
    <property type="match status" value="1"/>
</dbReference>
<dbReference type="Pfam" id="PF01249">
    <property type="entry name" value="Ribosomal_S21e"/>
    <property type="match status" value="1"/>
</dbReference>
<dbReference type="PIRSF" id="PIRSF002148">
    <property type="entry name" value="Ribosomal_S21e"/>
    <property type="match status" value="1"/>
</dbReference>
<accession>Q54BN4</accession>
<feature type="chain" id="PRO_0000328056" description="Small ribosomal subunit protein eS21">
    <location>
        <begin position="1"/>
        <end position="78"/>
    </location>
</feature>